<reference evidence="4" key="1">
    <citation type="journal article" date="1997" name="J. Biochem.">
        <title>Purification and characterization of a Ca2+ -dependent prothrombin activator, multactivase, from the venom of Echis multisquamatus.</title>
        <authorList>
            <person name="Yamada D."/>
            <person name="Morita T."/>
        </authorList>
    </citation>
    <scope>PROTEIN SEQUENCE</scope>
    <scope>FUNCTION</scope>
    <scope>SUBUNIT</scope>
    <source>
        <tissue>Venom</tissue>
    </source>
</reference>
<name>VM3M_ECHML</name>
<evidence type="ECO:0000250" key="1"/>
<evidence type="ECO:0000255" key="2">
    <source>
        <dbReference type="PROSITE-ProRule" id="PRU00276"/>
    </source>
</evidence>
<evidence type="ECO:0000269" key="3">
    <source>
    </source>
</evidence>
<evidence type="ECO:0000305" key="4"/>
<keyword id="KW-1204">Blood coagulation cascade activating toxin</keyword>
<keyword id="KW-0106">Calcium</keyword>
<keyword id="KW-0903">Direct protein sequencing</keyword>
<keyword id="KW-1015">Disulfide bond</keyword>
<keyword id="KW-1199">Hemostasis impairing toxin</keyword>
<keyword id="KW-0378">Hydrolase</keyword>
<keyword id="KW-0479">Metal-binding</keyword>
<keyword id="KW-0482">Metalloprotease</keyword>
<keyword id="KW-0645">Protease</keyword>
<keyword id="KW-0655">Prothrombin activator</keyword>
<keyword id="KW-0964">Secreted</keyword>
<keyword id="KW-0800">Toxin</keyword>
<keyword id="KW-0862">Zinc</keyword>
<proteinExistence type="evidence at protein level"/>
<dbReference type="EC" id="3.4.24.-"/>
<dbReference type="PIR" id="PC4420">
    <property type="entry name" value="PC4420"/>
</dbReference>
<dbReference type="MEROPS" id="M12.177"/>
<dbReference type="GO" id="GO:0005576">
    <property type="term" value="C:extracellular region"/>
    <property type="evidence" value="ECO:0007669"/>
    <property type="project" value="UniProtKB-SubCell"/>
</dbReference>
<dbReference type="GO" id="GO:0046872">
    <property type="term" value="F:metal ion binding"/>
    <property type="evidence" value="ECO:0007669"/>
    <property type="project" value="UniProtKB-KW"/>
</dbReference>
<dbReference type="GO" id="GO:0008237">
    <property type="term" value="F:metallopeptidase activity"/>
    <property type="evidence" value="ECO:0007669"/>
    <property type="project" value="UniProtKB-KW"/>
</dbReference>
<dbReference type="GO" id="GO:0016504">
    <property type="term" value="F:peptidase activator activity"/>
    <property type="evidence" value="ECO:0007669"/>
    <property type="project" value="UniProtKB-KW"/>
</dbReference>
<dbReference type="GO" id="GO:0090729">
    <property type="term" value="F:toxin activity"/>
    <property type="evidence" value="ECO:0007669"/>
    <property type="project" value="UniProtKB-KW"/>
</dbReference>
<dbReference type="GO" id="GO:0006508">
    <property type="term" value="P:proteolysis"/>
    <property type="evidence" value="ECO:0007669"/>
    <property type="project" value="UniProtKB-KW"/>
</dbReference>
<accession>P81797</accession>
<sequence>FPPHKGKFDKKFIELVIIVDHSXXTYK</sequence>
<comment type="function">
    <text evidence="3">This carinactivase-like calcium-dependent prothrombin (F2) activator activates prothrombin via recognition of the calcium ion bound conformation of its gamma-carboxyglutamic acid (GLA) domain, and the subsequent conversion of prothrombin to active thrombin is catalyzed by the catalytic subunit.</text>
</comment>
<comment type="cofactor">
    <cofactor evidence="1">
        <name>Zn(2+)</name>
        <dbReference type="ChEBI" id="CHEBI:29105"/>
    </cofactor>
    <text evidence="1">Binds 1 zinc ion per subunit.</text>
</comment>
<comment type="subunit">
    <text evidence="3">Heterodimer of a metalloproteinase subunit and a regulatory subunit comprising two homologous disulfide-linked lectins (AC P81798).</text>
</comment>
<comment type="subcellular location">
    <subcellularLocation>
        <location>Secreted</location>
    </subcellularLocation>
</comment>
<comment type="tissue specificity">
    <text>Expressed by the venom gland.</text>
</comment>
<comment type="similarity">
    <text evidence="4">Belongs to the venom metalloproteinase (M12B) family. P-III subfamily. P-IIId sub-subfamily.</text>
</comment>
<organism evidence="4">
    <name type="scientific">Echis multisquamatus</name>
    <name type="common">Central Asian sand viper</name>
    <dbReference type="NCBI Taxonomy" id="93050"/>
    <lineage>
        <taxon>Eukaryota</taxon>
        <taxon>Metazoa</taxon>
        <taxon>Chordata</taxon>
        <taxon>Craniata</taxon>
        <taxon>Vertebrata</taxon>
        <taxon>Euteleostomi</taxon>
        <taxon>Lepidosauria</taxon>
        <taxon>Squamata</taxon>
        <taxon>Bifurcata</taxon>
        <taxon>Unidentata</taxon>
        <taxon>Episquamata</taxon>
        <taxon>Toxicofera</taxon>
        <taxon>Serpentes</taxon>
        <taxon>Colubroidea</taxon>
        <taxon>Viperidae</taxon>
        <taxon>Viperinae</taxon>
        <taxon>Echis</taxon>
    </lineage>
</organism>
<protein>
    <recommendedName>
        <fullName>Zinc metalloproteinase multactivase catalytic subunit</fullName>
        <ecNumber>3.4.24.-</ecNumber>
    </recommendedName>
    <alternativeName>
        <fullName>Snake venom metalloproteinase</fullName>
        <shortName>SVMP</shortName>
    </alternativeName>
</protein>
<feature type="chain" id="PRO_0000078202" description="Zinc metalloproteinase multactivase catalytic subunit">
    <location>
        <begin position="1"/>
        <end position="27" status="greater than"/>
    </location>
</feature>
<feature type="domain" description="Peptidase M12B" evidence="2">
    <location>
        <begin position="12"/>
        <end position="27" status="greater than"/>
    </location>
</feature>
<feature type="binding site" evidence="1">
    <location>
        <position position="14"/>
    </location>
    <ligand>
        <name>Ca(2+)</name>
        <dbReference type="ChEBI" id="CHEBI:29108"/>
        <label>1</label>
    </ligand>
</feature>
<feature type="non-terminal residue">
    <location>
        <position position="27"/>
    </location>
</feature>